<protein>
    <recommendedName>
        <fullName evidence="1">Ketol-acid reductoisomerase (NADP(+))</fullName>
        <shortName evidence="1">KARI</shortName>
        <ecNumber evidence="1">1.1.1.86</ecNumber>
    </recommendedName>
    <alternativeName>
        <fullName evidence="1">Acetohydroxy-acid isomeroreductase</fullName>
        <shortName evidence="1">AHIR</shortName>
    </alternativeName>
    <alternativeName>
        <fullName evidence="1">Alpha-keto-beta-hydroxylacyl reductoisomerase</fullName>
    </alternativeName>
    <alternativeName>
        <fullName evidence="1">Ketol-acid reductoisomerase type 1</fullName>
    </alternativeName>
    <alternativeName>
        <fullName evidence="1">Ketol-acid reductoisomerase type I</fullName>
    </alternativeName>
</protein>
<sequence length="340" mass="37437">MRVYYDRDCDINLIKDKKVAILGYGSQGHAHALNLRDSGAKNVVVALREGSPSAKKAEAEGLKVMGIAEAAAWCDLIMFTMPDELQAETYKKYVHDNLREGSAIAFAHGLNVHFGLIEPKPGVDVIMMAPKGPGHTVRGEYVKGGGVPCLVAVHNDATGKAMEIGLSYCSAIGGGRSGIIETNFRQECETDLFGEQAVLCGGLVELIRMGFETLVEAGYEPEMAYFECLHEVKLIVDLIYEGGIANMNYSISNTAEYGEYVSGPRILPYEETKARMKAVLTDIQTGKFVRDFMQENAVGQPFFKATRRINDEHQIEQVGEKLRGMMPWISKGKMVDRARN</sequence>
<name>ILVC_CERS1</name>
<reference key="1">
    <citation type="submission" date="2007-02" db="EMBL/GenBank/DDBJ databases">
        <title>Complete sequence of chromosome 1 of Rhodobacter sphaeroides ATCC 17029.</title>
        <authorList>
            <person name="Copeland A."/>
            <person name="Lucas S."/>
            <person name="Lapidus A."/>
            <person name="Barry K."/>
            <person name="Detter J.C."/>
            <person name="Glavina del Rio T."/>
            <person name="Hammon N."/>
            <person name="Israni S."/>
            <person name="Dalin E."/>
            <person name="Tice H."/>
            <person name="Pitluck S."/>
            <person name="Kiss H."/>
            <person name="Brettin T."/>
            <person name="Bruce D."/>
            <person name="Han C."/>
            <person name="Tapia R."/>
            <person name="Gilna P."/>
            <person name="Schmutz J."/>
            <person name="Larimer F."/>
            <person name="Land M."/>
            <person name="Hauser L."/>
            <person name="Kyrpides N."/>
            <person name="Mikhailova N."/>
            <person name="Richardson P."/>
            <person name="Mackenzie C."/>
            <person name="Choudhary M."/>
            <person name="Donohue T.J."/>
            <person name="Kaplan S."/>
        </authorList>
    </citation>
    <scope>NUCLEOTIDE SEQUENCE [LARGE SCALE GENOMIC DNA]</scope>
    <source>
        <strain>ATCC 17029 / ATH 2.4.9</strain>
    </source>
</reference>
<organism>
    <name type="scientific">Cereibacter sphaeroides (strain ATCC 17029 / ATH 2.4.9)</name>
    <name type="common">Rhodobacter sphaeroides</name>
    <dbReference type="NCBI Taxonomy" id="349101"/>
    <lineage>
        <taxon>Bacteria</taxon>
        <taxon>Pseudomonadati</taxon>
        <taxon>Pseudomonadota</taxon>
        <taxon>Alphaproteobacteria</taxon>
        <taxon>Rhodobacterales</taxon>
        <taxon>Paracoccaceae</taxon>
        <taxon>Cereibacter</taxon>
    </lineage>
</organism>
<comment type="function">
    <text evidence="1">Involved in the biosynthesis of branched-chain amino acids (BCAA). Catalyzes an alkyl-migration followed by a ketol-acid reduction of (S)-2-acetolactate (S2AL) to yield (R)-2,3-dihydroxy-isovalerate. In the isomerase reaction, S2AL is rearranged via a Mg-dependent methyl migration to produce 3-hydroxy-3-methyl-2-ketobutyrate (HMKB). In the reductase reaction, this 2-ketoacid undergoes a metal-dependent reduction by NADPH to yield (R)-2,3-dihydroxy-isovalerate.</text>
</comment>
<comment type="catalytic activity">
    <reaction evidence="1">
        <text>(2R)-2,3-dihydroxy-3-methylbutanoate + NADP(+) = (2S)-2-acetolactate + NADPH + H(+)</text>
        <dbReference type="Rhea" id="RHEA:22068"/>
        <dbReference type="ChEBI" id="CHEBI:15378"/>
        <dbReference type="ChEBI" id="CHEBI:49072"/>
        <dbReference type="ChEBI" id="CHEBI:57783"/>
        <dbReference type="ChEBI" id="CHEBI:58349"/>
        <dbReference type="ChEBI" id="CHEBI:58476"/>
        <dbReference type="EC" id="1.1.1.86"/>
    </reaction>
</comment>
<comment type="catalytic activity">
    <reaction evidence="1">
        <text>(2R,3R)-2,3-dihydroxy-3-methylpentanoate + NADP(+) = (S)-2-ethyl-2-hydroxy-3-oxobutanoate + NADPH + H(+)</text>
        <dbReference type="Rhea" id="RHEA:13493"/>
        <dbReference type="ChEBI" id="CHEBI:15378"/>
        <dbReference type="ChEBI" id="CHEBI:49256"/>
        <dbReference type="ChEBI" id="CHEBI:49258"/>
        <dbReference type="ChEBI" id="CHEBI:57783"/>
        <dbReference type="ChEBI" id="CHEBI:58349"/>
        <dbReference type="EC" id="1.1.1.86"/>
    </reaction>
</comment>
<comment type="cofactor">
    <cofactor evidence="1">
        <name>Mg(2+)</name>
        <dbReference type="ChEBI" id="CHEBI:18420"/>
    </cofactor>
    <text evidence="1">Binds 2 magnesium ions per subunit.</text>
</comment>
<comment type="pathway">
    <text evidence="1">Amino-acid biosynthesis; L-isoleucine biosynthesis; L-isoleucine from 2-oxobutanoate: step 2/4.</text>
</comment>
<comment type="pathway">
    <text evidence="1">Amino-acid biosynthesis; L-valine biosynthesis; L-valine from pyruvate: step 2/4.</text>
</comment>
<comment type="similarity">
    <text evidence="1">Belongs to the ketol-acid reductoisomerase family.</text>
</comment>
<dbReference type="EC" id="1.1.1.86" evidence="1"/>
<dbReference type="EMBL" id="CP000577">
    <property type="protein sequence ID" value="ABN75630.1"/>
    <property type="molecule type" value="Genomic_DNA"/>
</dbReference>
<dbReference type="RefSeq" id="WP_002722768.1">
    <property type="nucleotide sequence ID" value="NC_009049.1"/>
</dbReference>
<dbReference type="SMR" id="A3PH14"/>
<dbReference type="GeneID" id="67445655"/>
<dbReference type="KEGG" id="rsh:Rsph17029_0514"/>
<dbReference type="HOGENOM" id="CLU_033821_0_1_5"/>
<dbReference type="UniPathway" id="UPA00047">
    <property type="reaction ID" value="UER00056"/>
</dbReference>
<dbReference type="UniPathway" id="UPA00049">
    <property type="reaction ID" value="UER00060"/>
</dbReference>
<dbReference type="GO" id="GO:0005829">
    <property type="term" value="C:cytosol"/>
    <property type="evidence" value="ECO:0007669"/>
    <property type="project" value="TreeGrafter"/>
</dbReference>
<dbReference type="GO" id="GO:0004455">
    <property type="term" value="F:ketol-acid reductoisomerase activity"/>
    <property type="evidence" value="ECO:0007669"/>
    <property type="project" value="UniProtKB-UniRule"/>
</dbReference>
<dbReference type="GO" id="GO:0000287">
    <property type="term" value="F:magnesium ion binding"/>
    <property type="evidence" value="ECO:0007669"/>
    <property type="project" value="UniProtKB-UniRule"/>
</dbReference>
<dbReference type="GO" id="GO:0050661">
    <property type="term" value="F:NADP binding"/>
    <property type="evidence" value="ECO:0007669"/>
    <property type="project" value="InterPro"/>
</dbReference>
<dbReference type="GO" id="GO:0009097">
    <property type="term" value="P:isoleucine biosynthetic process"/>
    <property type="evidence" value="ECO:0007669"/>
    <property type="project" value="UniProtKB-UniRule"/>
</dbReference>
<dbReference type="GO" id="GO:0009099">
    <property type="term" value="P:L-valine biosynthetic process"/>
    <property type="evidence" value="ECO:0007669"/>
    <property type="project" value="UniProtKB-UniRule"/>
</dbReference>
<dbReference type="FunFam" id="3.40.50.720:FF:000023">
    <property type="entry name" value="Ketol-acid reductoisomerase (NADP(+))"/>
    <property type="match status" value="1"/>
</dbReference>
<dbReference type="Gene3D" id="6.10.240.10">
    <property type="match status" value="1"/>
</dbReference>
<dbReference type="Gene3D" id="3.40.50.720">
    <property type="entry name" value="NAD(P)-binding Rossmann-like Domain"/>
    <property type="match status" value="1"/>
</dbReference>
<dbReference type="HAMAP" id="MF_00435">
    <property type="entry name" value="IlvC"/>
    <property type="match status" value="1"/>
</dbReference>
<dbReference type="InterPro" id="IPR008927">
    <property type="entry name" value="6-PGluconate_DH-like_C_sf"/>
</dbReference>
<dbReference type="InterPro" id="IPR013023">
    <property type="entry name" value="KARI"/>
</dbReference>
<dbReference type="InterPro" id="IPR000506">
    <property type="entry name" value="KARI_C"/>
</dbReference>
<dbReference type="InterPro" id="IPR013116">
    <property type="entry name" value="KARI_N"/>
</dbReference>
<dbReference type="InterPro" id="IPR014359">
    <property type="entry name" value="KARI_prok"/>
</dbReference>
<dbReference type="InterPro" id="IPR036291">
    <property type="entry name" value="NAD(P)-bd_dom_sf"/>
</dbReference>
<dbReference type="NCBIfam" id="TIGR00465">
    <property type="entry name" value="ilvC"/>
    <property type="match status" value="1"/>
</dbReference>
<dbReference type="NCBIfam" id="NF004017">
    <property type="entry name" value="PRK05479.1"/>
    <property type="match status" value="1"/>
</dbReference>
<dbReference type="NCBIfam" id="NF009940">
    <property type="entry name" value="PRK13403.1"/>
    <property type="match status" value="1"/>
</dbReference>
<dbReference type="PANTHER" id="PTHR21371">
    <property type="entry name" value="KETOL-ACID REDUCTOISOMERASE, MITOCHONDRIAL"/>
    <property type="match status" value="1"/>
</dbReference>
<dbReference type="PANTHER" id="PTHR21371:SF1">
    <property type="entry name" value="KETOL-ACID REDUCTOISOMERASE, MITOCHONDRIAL"/>
    <property type="match status" value="1"/>
</dbReference>
<dbReference type="Pfam" id="PF01450">
    <property type="entry name" value="KARI_C"/>
    <property type="match status" value="1"/>
</dbReference>
<dbReference type="Pfam" id="PF07991">
    <property type="entry name" value="KARI_N"/>
    <property type="match status" value="1"/>
</dbReference>
<dbReference type="PIRSF" id="PIRSF000116">
    <property type="entry name" value="IlvC_gammaproteo"/>
    <property type="match status" value="1"/>
</dbReference>
<dbReference type="SUPFAM" id="SSF48179">
    <property type="entry name" value="6-phosphogluconate dehydrogenase C-terminal domain-like"/>
    <property type="match status" value="1"/>
</dbReference>
<dbReference type="SUPFAM" id="SSF51735">
    <property type="entry name" value="NAD(P)-binding Rossmann-fold domains"/>
    <property type="match status" value="1"/>
</dbReference>
<dbReference type="PROSITE" id="PS51851">
    <property type="entry name" value="KARI_C"/>
    <property type="match status" value="1"/>
</dbReference>
<dbReference type="PROSITE" id="PS51850">
    <property type="entry name" value="KARI_N"/>
    <property type="match status" value="1"/>
</dbReference>
<gene>
    <name evidence="1" type="primary">ilvC</name>
    <name type="ordered locus">Rsph17029_0514</name>
</gene>
<feature type="chain" id="PRO_1000050570" description="Ketol-acid reductoisomerase (NADP(+))">
    <location>
        <begin position="1"/>
        <end position="340"/>
    </location>
</feature>
<feature type="domain" description="KARI N-terminal Rossmann" evidence="2">
    <location>
        <begin position="1"/>
        <end position="182"/>
    </location>
</feature>
<feature type="domain" description="KARI C-terminal knotted" evidence="3">
    <location>
        <begin position="183"/>
        <end position="329"/>
    </location>
</feature>
<feature type="active site" evidence="1">
    <location>
        <position position="108"/>
    </location>
</feature>
<feature type="binding site" evidence="1">
    <location>
        <begin position="24"/>
        <end position="27"/>
    </location>
    <ligand>
        <name>NADP(+)</name>
        <dbReference type="ChEBI" id="CHEBI:58349"/>
    </ligand>
</feature>
<feature type="binding site" evidence="1">
    <location>
        <position position="48"/>
    </location>
    <ligand>
        <name>NADP(+)</name>
        <dbReference type="ChEBI" id="CHEBI:58349"/>
    </ligand>
</feature>
<feature type="binding site" evidence="1">
    <location>
        <position position="51"/>
    </location>
    <ligand>
        <name>NADP(+)</name>
        <dbReference type="ChEBI" id="CHEBI:58349"/>
    </ligand>
</feature>
<feature type="binding site" evidence="1">
    <location>
        <position position="53"/>
    </location>
    <ligand>
        <name>NADP(+)</name>
        <dbReference type="ChEBI" id="CHEBI:58349"/>
    </ligand>
</feature>
<feature type="binding site" evidence="1">
    <location>
        <begin position="83"/>
        <end position="86"/>
    </location>
    <ligand>
        <name>NADP(+)</name>
        <dbReference type="ChEBI" id="CHEBI:58349"/>
    </ligand>
</feature>
<feature type="binding site" evidence="1">
    <location>
        <position position="134"/>
    </location>
    <ligand>
        <name>NADP(+)</name>
        <dbReference type="ChEBI" id="CHEBI:58349"/>
    </ligand>
</feature>
<feature type="binding site" evidence="1">
    <location>
        <position position="191"/>
    </location>
    <ligand>
        <name>Mg(2+)</name>
        <dbReference type="ChEBI" id="CHEBI:18420"/>
        <label>1</label>
    </ligand>
</feature>
<feature type="binding site" evidence="1">
    <location>
        <position position="191"/>
    </location>
    <ligand>
        <name>Mg(2+)</name>
        <dbReference type="ChEBI" id="CHEBI:18420"/>
        <label>2</label>
    </ligand>
</feature>
<feature type="binding site" evidence="1">
    <location>
        <position position="195"/>
    </location>
    <ligand>
        <name>Mg(2+)</name>
        <dbReference type="ChEBI" id="CHEBI:18420"/>
        <label>1</label>
    </ligand>
</feature>
<feature type="binding site" evidence="1">
    <location>
        <position position="227"/>
    </location>
    <ligand>
        <name>Mg(2+)</name>
        <dbReference type="ChEBI" id="CHEBI:18420"/>
        <label>2</label>
    </ligand>
</feature>
<feature type="binding site" evidence="1">
    <location>
        <position position="231"/>
    </location>
    <ligand>
        <name>Mg(2+)</name>
        <dbReference type="ChEBI" id="CHEBI:18420"/>
        <label>2</label>
    </ligand>
</feature>
<feature type="binding site" evidence="1">
    <location>
        <position position="252"/>
    </location>
    <ligand>
        <name>substrate</name>
    </ligand>
</feature>
<evidence type="ECO:0000255" key="1">
    <source>
        <dbReference type="HAMAP-Rule" id="MF_00435"/>
    </source>
</evidence>
<evidence type="ECO:0000255" key="2">
    <source>
        <dbReference type="PROSITE-ProRule" id="PRU01197"/>
    </source>
</evidence>
<evidence type="ECO:0000255" key="3">
    <source>
        <dbReference type="PROSITE-ProRule" id="PRU01198"/>
    </source>
</evidence>
<proteinExistence type="inferred from homology"/>
<keyword id="KW-0028">Amino-acid biosynthesis</keyword>
<keyword id="KW-0100">Branched-chain amino acid biosynthesis</keyword>
<keyword id="KW-0460">Magnesium</keyword>
<keyword id="KW-0479">Metal-binding</keyword>
<keyword id="KW-0521">NADP</keyword>
<keyword id="KW-0560">Oxidoreductase</keyword>
<accession>A3PH14</accession>